<protein>
    <recommendedName>
        <fullName evidence="8">Germacrene A hydroxylase</fullName>
        <ecNumber evidence="6">1.14.14.95</ecNumber>
    </recommendedName>
    <alternativeName>
        <fullName evidence="8">Germacrene A oxidase</fullName>
        <shortName evidence="8">HaGAO</shortName>
    </alternativeName>
</protein>
<evidence type="ECO:0000250" key="1"/>
<evidence type="ECO:0000250" key="2">
    <source>
        <dbReference type="UniProtKB" id="D5JBW8"/>
    </source>
</evidence>
<evidence type="ECO:0000250" key="3">
    <source>
        <dbReference type="UniProtKB" id="P04798"/>
    </source>
</evidence>
<evidence type="ECO:0000255" key="4"/>
<evidence type="ECO:0000255" key="5">
    <source>
        <dbReference type="PROSITE-ProRule" id="PRU00498"/>
    </source>
</evidence>
<evidence type="ECO:0000269" key="6">
    <source>
    </source>
</evidence>
<evidence type="ECO:0000269" key="7">
    <source>
    </source>
</evidence>
<evidence type="ECO:0000303" key="8">
    <source>
    </source>
</evidence>
<evidence type="ECO:0000303" key="9">
    <source>
    </source>
</evidence>
<evidence type="ECO:0000305" key="10"/>
<keyword id="KW-0256">Endoplasmic reticulum</keyword>
<keyword id="KW-0325">Glycoprotein</keyword>
<keyword id="KW-0349">Heme</keyword>
<keyword id="KW-0408">Iron</keyword>
<keyword id="KW-0472">Membrane</keyword>
<keyword id="KW-0479">Metal-binding</keyword>
<keyword id="KW-0503">Monooxygenase</keyword>
<keyword id="KW-0560">Oxidoreductase</keyword>
<keyword id="KW-0735">Signal-anchor</keyword>
<keyword id="KW-0812">Transmembrane</keyword>
<keyword id="KW-1133">Transmembrane helix</keyword>
<accession>D5JBX0</accession>
<name>GAO_HELAN</name>
<feature type="chain" id="PRO_0000412766" description="Germacrene A hydroxylase">
    <location>
        <begin position="1"/>
        <end position="488"/>
    </location>
</feature>
<feature type="topological domain" description="Cytoplasmic" evidence="4">
    <location>
        <begin position="1"/>
        <end position="6"/>
    </location>
</feature>
<feature type="transmembrane region" description="Helical; Signal-anchor for type II membrane protein" evidence="4">
    <location>
        <begin position="7"/>
        <end position="23"/>
    </location>
</feature>
<feature type="topological domain" description="Lumenal" evidence="4">
    <location>
        <begin position="24"/>
        <end position="488"/>
    </location>
</feature>
<feature type="binding site" description="axial binding residue" evidence="3">
    <location>
        <position position="432"/>
    </location>
    <ligand>
        <name>heme</name>
        <dbReference type="ChEBI" id="CHEBI:30413"/>
    </ligand>
    <ligandPart>
        <name>Fe</name>
        <dbReference type="ChEBI" id="CHEBI:18248"/>
    </ligandPart>
</feature>
<feature type="glycosylation site" description="N-linked (GlcNAc...) asparagine" evidence="5">
    <location>
        <position position="169"/>
    </location>
</feature>
<feature type="glycosylation site" description="N-linked (GlcNAc...) asparagine" evidence="5">
    <location>
        <position position="260"/>
    </location>
</feature>
<feature type="glycosylation site" description="N-linked (GlcNAc...) asparagine" evidence="5">
    <location>
        <position position="379"/>
    </location>
</feature>
<feature type="glycosylation site" description="N-linked (GlcNAc...) asparagine" evidence="5">
    <location>
        <position position="412"/>
    </location>
</feature>
<comment type="function">
    <text evidence="6">Involved in the biosynthesis of germacrene-derived sesquiterpene lactones (PubMed:20351109). Catalyzes three consecutive oxidations of germacrene A to produce germacrene A acid (PubMed:20351109). Could also catalyze the three-step oxidation of non-natural substrate amorphadiene to artemisinic acid (PubMed:20351109).</text>
</comment>
<comment type="catalytic activity">
    <reaction evidence="6">
        <text>(+)-(R)-germacrene A + 3 reduced [NADPH--hemoprotein reductase] + 3 O2 = germacra-1(10),4,11(13)-trien-12-oate + 3 oxidized [NADPH--hemoprotein reductase] + 4 H2O + 4 H(+)</text>
        <dbReference type="Rhea" id="RHEA:30303"/>
        <dbReference type="Rhea" id="RHEA-COMP:11964"/>
        <dbReference type="Rhea" id="RHEA-COMP:11965"/>
        <dbReference type="ChEBI" id="CHEBI:15377"/>
        <dbReference type="ChEBI" id="CHEBI:15378"/>
        <dbReference type="ChEBI" id="CHEBI:15379"/>
        <dbReference type="ChEBI" id="CHEBI:41595"/>
        <dbReference type="ChEBI" id="CHEBI:57618"/>
        <dbReference type="ChEBI" id="CHEBI:58210"/>
        <dbReference type="ChEBI" id="CHEBI:61301"/>
        <dbReference type="EC" id="1.14.14.95"/>
    </reaction>
    <physiologicalReaction direction="left-to-right" evidence="6">
        <dbReference type="Rhea" id="RHEA:30304"/>
    </physiologicalReaction>
</comment>
<comment type="cofactor">
    <cofactor evidence="1">
        <name>heme</name>
        <dbReference type="ChEBI" id="CHEBI:30413"/>
    </cofactor>
</comment>
<comment type="pathway">
    <text evidence="9">Secondary metabolite biosynthesis; terpenoid biosynthesis.</text>
</comment>
<comment type="subcellular location">
    <subcellularLocation>
        <location evidence="2">Endoplasmic reticulum membrane</location>
        <topology evidence="2">Single-pass type II membrane protein</topology>
    </subcellularLocation>
</comment>
<comment type="tissue specificity">
    <text evidence="7">Expressed in leaf primordia.</text>
</comment>
<comment type="developmental stage">
    <text evidence="7">In developing leaves, expressed at very low levels in young leaf primordia, but strongly induced after the fourth and fifth days following leaf primordia initiation.</text>
</comment>
<comment type="similarity">
    <text evidence="10">Belongs to the cytochrome P450 family.</text>
</comment>
<dbReference type="EC" id="1.14.14.95" evidence="6"/>
<dbReference type="EMBL" id="GU256646">
    <property type="protein sequence ID" value="ADF43082.1"/>
    <property type="molecule type" value="mRNA"/>
</dbReference>
<dbReference type="SMR" id="D5JBX0"/>
<dbReference type="GlyCosmos" id="D5JBX0">
    <property type="glycosylation" value="4 sites, No reported glycans"/>
</dbReference>
<dbReference type="EnsemblPlants" id="mRNA:HanXRQr2_Chr13g0583041">
    <property type="protein sequence ID" value="mRNA:HanXRQr2_Chr13g0583041"/>
    <property type="gene ID" value="HanXRQr2_Chr13g0583041"/>
</dbReference>
<dbReference type="Gramene" id="mRNA:HanXRQr2_Chr13g0583041">
    <property type="protein sequence ID" value="mRNA:HanXRQr2_Chr13g0583041"/>
    <property type="gene ID" value="HanXRQr2_Chr13g0583041"/>
</dbReference>
<dbReference type="OMA" id="ERILWYE"/>
<dbReference type="OrthoDB" id="1470350at2759"/>
<dbReference type="BRENDA" id="1.14.14.95">
    <property type="organism ID" value="2597"/>
</dbReference>
<dbReference type="UniPathway" id="UPA00213"/>
<dbReference type="GO" id="GO:0005789">
    <property type="term" value="C:endoplasmic reticulum membrane"/>
    <property type="evidence" value="ECO:0007669"/>
    <property type="project" value="UniProtKB-SubCell"/>
</dbReference>
<dbReference type="GO" id="GO:0106223">
    <property type="term" value="F:germacrene A hydroxylase activity"/>
    <property type="evidence" value="ECO:0000314"/>
    <property type="project" value="UniProtKB"/>
</dbReference>
<dbReference type="GO" id="GO:0020037">
    <property type="term" value="F:heme binding"/>
    <property type="evidence" value="ECO:0007669"/>
    <property type="project" value="InterPro"/>
</dbReference>
<dbReference type="GO" id="GO:0005506">
    <property type="term" value="F:iron ion binding"/>
    <property type="evidence" value="ECO:0007669"/>
    <property type="project" value="InterPro"/>
</dbReference>
<dbReference type="GO" id="GO:0051762">
    <property type="term" value="P:sesquiterpene biosynthetic process"/>
    <property type="evidence" value="ECO:0000314"/>
    <property type="project" value="UniProtKB"/>
</dbReference>
<dbReference type="GO" id="GO:0016114">
    <property type="term" value="P:terpenoid biosynthetic process"/>
    <property type="evidence" value="ECO:0007669"/>
    <property type="project" value="UniProtKB-UniPathway"/>
</dbReference>
<dbReference type="CDD" id="cd11072">
    <property type="entry name" value="CYP71-like"/>
    <property type="match status" value="1"/>
</dbReference>
<dbReference type="FunFam" id="1.10.630.10:FF:000043">
    <property type="entry name" value="Cytochrome P450 99A2"/>
    <property type="match status" value="1"/>
</dbReference>
<dbReference type="Gene3D" id="1.10.630.10">
    <property type="entry name" value="Cytochrome P450"/>
    <property type="match status" value="1"/>
</dbReference>
<dbReference type="InterPro" id="IPR001128">
    <property type="entry name" value="Cyt_P450"/>
</dbReference>
<dbReference type="InterPro" id="IPR017972">
    <property type="entry name" value="Cyt_P450_CS"/>
</dbReference>
<dbReference type="InterPro" id="IPR002401">
    <property type="entry name" value="Cyt_P450_E_grp-I"/>
</dbReference>
<dbReference type="InterPro" id="IPR036396">
    <property type="entry name" value="Cyt_P450_sf"/>
</dbReference>
<dbReference type="PANTHER" id="PTHR47955">
    <property type="entry name" value="CYTOCHROME P450 FAMILY 71 PROTEIN"/>
    <property type="match status" value="1"/>
</dbReference>
<dbReference type="PANTHER" id="PTHR47955:SF9">
    <property type="entry name" value="PREMNASPIRODIENE OXYGENASE-LIKE"/>
    <property type="match status" value="1"/>
</dbReference>
<dbReference type="Pfam" id="PF00067">
    <property type="entry name" value="p450"/>
    <property type="match status" value="1"/>
</dbReference>
<dbReference type="PRINTS" id="PR00463">
    <property type="entry name" value="EP450I"/>
</dbReference>
<dbReference type="PRINTS" id="PR00385">
    <property type="entry name" value="P450"/>
</dbReference>
<dbReference type="SUPFAM" id="SSF48264">
    <property type="entry name" value="Cytochrome P450"/>
    <property type="match status" value="1"/>
</dbReference>
<dbReference type="PROSITE" id="PS00086">
    <property type="entry name" value="CYTOCHROME_P450"/>
    <property type="match status" value="1"/>
</dbReference>
<proteinExistence type="evidence at protein level"/>
<organism>
    <name type="scientific">Helianthus annuus</name>
    <name type="common">Common sunflower</name>
    <dbReference type="NCBI Taxonomy" id="4232"/>
    <lineage>
        <taxon>Eukaryota</taxon>
        <taxon>Viridiplantae</taxon>
        <taxon>Streptophyta</taxon>
        <taxon>Embryophyta</taxon>
        <taxon>Tracheophyta</taxon>
        <taxon>Spermatophyta</taxon>
        <taxon>Magnoliopsida</taxon>
        <taxon>eudicotyledons</taxon>
        <taxon>Gunneridae</taxon>
        <taxon>Pentapetalae</taxon>
        <taxon>asterids</taxon>
        <taxon>campanulids</taxon>
        <taxon>Asterales</taxon>
        <taxon>Asteraceae</taxon>
        <taxon>Asteroideae</taxon>
        <taxon>Heliantheae alliance</taxon>
        <taxon>Heliantheae</taxon>
        <taxon>Helianthus</taxon>
    </lineage>
</organism>
<sequence>MEVSLTTSIALATIVFFLYKLLTRPTSSKNRLPEPWRLPIIGHMHHLIGTMPHRGVMDLARKYGSLMHLQLGEVSAIVVSSPKWAKEILTTYDIPFANRPETLTGEIIAYHNTDIVLAPYGEYWRQLRKLCTLELLSVKKVKSFQSLREEECWNLVQEIKASGSGTPFNLSEGIFKVIATVLSRAAFGKGIKDQKQFTEIVKEILRETGGFDVADIFPSKKFLHHLSGKRGRLTSIHNKLDSLINNLVAEHTVSKSSKVNETLLDVLLRLKNSEEFPLTADNVKAIILDMFGAGTDTSSATVEWAISELIRCPRAMEKVQAELRQALNGKERIKEEEIQDLPYLNLVIRETLRLHPPLPLVMPRECRQAMNLAGYDVANKTKLIVNVFAINRDPEYWKDAESFNPERFENSNTTIMGADYEYLPFGAGRRMCPGSALGLANVQLPLANILYYFKWKLPNGASHDQLDMTESFGATVQRKTELMLVPSF</sequence>
<gene>
    <name evidence="8" type="primary">GAO</name>
</gene>
<reference key="1">
    <citation type="journal article" date="2010" name="J. Biol. Chem.">
        <title>Biochemical conservation and evolution of germacrene A oxidase in asteraceae.</title>
        <authorList>
            <person name="Nguyen D.T."/>
            <person name="Goepfert J.C."/>
            <person name="Ikezawa N."/>
            <person name="Macnevin G."/>
            <person name="Kathiresan M."/>
            <person name="Conrad J."/>
            <person name="Spring O."/>
            <person name="Ro D.-K."/>
        </authorList>
    </citation>
    <scope>NUCLEOTIDE SEQUENCE [MRNA]</scope>
    <scope>FUNCTION</scope>
    <scope>CATALYTIC ACTIVITY</scope>
</reference>
<reference key="2">
    <citation type="journal article" date="2018" name="ACS Chem. Biol.">
        <title>Biosynthesis of eupatolide-A metabolic route for sesquiterpene lactone formation involving the P450 enzyme CYP71DD6.</title>
        <authorList>
            <person name="Frey M."/>
            <person name="Schmauder K."/>
            <person name="Pateraki I."/>
            <person name="Spring O."/>
        </authorList>
    </citation>
    <scope>DEVELOPMENTAL STAGE</scope>
    <scope>TISSUE SPECIFICITY</scope>
</reference>
<reference key="3">
    <citation type="journal article" date="2019" name="Nat. Prod. Rep.">
        <title>Non-volatile natural products in plant glandular trichomes: chemistry, biological activities and biosynthesis.</title>
        <authorList>
            <person name="Liu Y."/>
            <person name="Jing S.-X."/>
            <person name="Luo S.-H."/>
            <person name="Li S.-H."/>
        </authorList>
    </citation>
    <scope>PATHWAY</scope>
    <scope>REVIEW</scope>
</reference>